<proteinExistence type="inferred from homology"/>
<gene>
    <name evidence="1" type="primary">serC</name>
    <name type="ordered locus">SeAg_B0982</name>
</gene>
<reference key="1">
    <citation type="journal article" date="2011" name="J. Bacteriol.">
        <title>Comparative genomics of 28 Salmonella enterica isolates: evidence for CRISPR-mediated adaptive sublineage evolution.</title>
        <authorList>
            <person name="Fricke W.F."/>
            <person name="Mammel M.K."/>
            <person name="McDermott P.F."/>
            <person name="Tartera C."/>
            <person name="White D.G."/>
            <person name="Leclerc J.E."/>
            <person name="Ravel J."/>
            <person name="Cebula T.A."/>
        </authorList>
    </citation>
    <scope>NUCLEOTIDE SEQUENCE [LARGE SCALE GENOMIC DNA]</scope>
    <source>
        <strain>SL483</strain>
    </source>
</reference>
<sequence length="362" mass="39855">MAQVFNFSSGPAMLPAEVLKLAQQELRDWHGLGTSVMEISHRGKEFIQVAEEAEQDFRDLLNIPSNYKVLFCHGGGRGQFAGVPLNLLGDKTTADYVDAGYWAASAIKEAKKYCAPQIIDAKITVDGKRAVKPMREWQLSDNAAYLHYCPNETIDGIAIDETPDFGPEVVVTADFSSTILSAPLDVSRYGVIYAGAQKNIGPAGLTLVIVREDLLGKAHESCPSILDYTVLNDNDSMFNTPPTFAWYLSGLVFKWLKAQGGVAAMHKINQQKAELLYGVIDNSDFYRNDVAQANRSRMNVPFQLADNALDKVFLEESFAAGLHALKGHRVVGGMRASIYNAMPIEGVKALTDFMIDFERRHG</sequence>
<name>SERC_SALA4</name>
<evidence type="ECO:0000255" key="1">
    <source>
        <dbReference type="HAMAP-Rule" id="MF_00160"/>
    </source>
</evidence>
<keyword id="KW-0028">Amino-acid biosynthesis</keyword>
<keyword id="KW-0032">Aminotransferase</keyword>
<keyword id="KW-0963">Cytoplasm</keyword>
<keyword id="KW-0663">Pyridoxal phosphate</keyword>
<keyword id="KW-0664">Pyridoxine biosynthesis</keyword>
<keyword id="KW-0718">Serine biosynthesis</keyword>
<keyword id="KW-0808">Transferase</keyword>
<dbReference type="EC" id="2.6.1.52" evidence="1"/>
<dbReference type="EMBL" id="CP001138">
    <property type="protein sequence ID" value="ACH48969.1"/>
    <property type="molecule type" value="Genomic_DNA"/>
</dbReference>
<dbReference type="RefSeq" id="WP_000079590.1">
    <property type="nucleotide sequence ID" value="NC_011149.1"/>
</dbReference>
<dbReference type="SMR" id="B5F159"/>
<dbReference type="KEGG" id="sea:SeAg_B0982"/>
<dbReference type="HOGENOM" id="CLU_034866_0_2_6"/>
<dbReference type="UniPathway" id="UPA00135">
    <property type="reaction ID" value="UER00197"/>
</dbReference>
<dbReference type="UniPathway" id="UPA00244">
    <property type="reaction ID" value="UER00311"/>
</dbReference>
<dbReference type="Proteomes" id="UP000008819">
    <property type="component" value="Chromosome"/>
</dbReference>
<dbReference type="GO" id="GO:0005737">
    <property type="term" value="C:cytoplasm"/>
    <property type="evidence" value="ECO:0007669"/>
    <property type="project" value="UniProtKB-SubCell"/>
</dbReference>
<dbReference type="GO" id="GO:0004648">
    <property type="term" value="F:O-phospho-L-serine:2-oxoglutarate aminotransferase activity"/>
    <property type="evidence" value="ECO:0007669"/>
    <property type="project" value="UniProtKB-UniRule"/>
</dbReference>
<dbReference type="GO" id="GO:0030170">
    <property type="term" value="F:pyridoxal phosphate binding"/>
    <property type="evidence" value="ECO:0007669"/>
    <property type="project" value="UniProtKB-UniRule"/>
</dbReference>
<dbReference type="GO" id="GO:0006564">
    <property type="term" value="P:L-serine biosynthetic process"/>
    <property type="evidence" value="ECO:0007669"/>
    <property type="project" value="UniProtKB-UniRule"/>
</dbReference>
<dbReference type="GO" id="GO:0008615">
    <property type="term" value="P:pyridoxine biosynthetic process"/>
    <property type="evidence" value="ECO:0007669"/>
    <property type="project" value="UniProtKB-UniRule"/>
</dbReference>
<dbReference type="CDD" id="cd00611">
    <property type="entry name" value="PSAT_like"/>
    <property type="match status" value="1"/>
</dbReference>
<dbReference type="FunFam" id="3.40.640.10:FF:000010">
    <property type="entry name" value="Phosphoserine aminotransferase"/>
    <property type="match status" value="1"/>
</dbReference>
<dbReference type="FunFam" id="3.90.1150.10:FF:000006">
    <property type="entry name" value="Phosphoserine aminotransferase"/>
    <property type="match status" value="1"/>
</dbReference>
<dbReference type="Gene3D" id="3.90.1150.10">
    <property type="entry name" value="Aspartate Aminotransferase, domain 1"/>
    <property type="match status" value="1"/>
</dbReference>
<dbReference type="Gene3D" id="3.40.640.10">
    <property type="entry name" value="Type I PLP-dependent aspartate aminotransferase-like (Major domain)"/>
    <property type="match status" value="1"/>
</dbReference>
<dbReference type="HAMAP" id="MF_00160">
    <property type="entry name" value="SerC_aminotrans_5"/>
    <property type="match status" value="1"/>
</dbReference>
<dbReference type="InterPro" id="IPR000192">
    <property type="entry name" value="Aminotrans_V_dom"/>
</dbReference>
<dbReference type="InterPro" id="IPR020578">
    <property type="entry name" value="Aminotrans_V_PyrdxlP_BS"/>
</dbReference>
<dbReference type="InterPro" id="IPR022278">
    <property type="entry name" value="Pser_aminoTfrase"/>
</dbReference>
<dbReference type="InterPro" id="IPR015424">
    <property type="entry name" value="PyrdxlP-dep_Trfase"/>
</dbReference>
<dbReference type="InterPro" id="IPR015421">
    <property type="entry name" value="PyrdxlP-dep_Trfase_major"/>
</dbReference>
<dbReference type="InterPro" id="IPR015422">
    <property type="entry name" value="PyrdxlP-dep_Trfase_small"/>
</dbReference>
<dbReference type="NCBIfam" id="NF003764">
    <property type="entry name" value="PRK05355.1"/>
    <property type="match status" value="1"/>
</dbReference>
<dbReference type="NCBIfam" id="TIGR01364">
    <property type="entry name" value="serC_1"/>
    <property type="match status" value="1"/>
</dbReference>
<dbReference type="PANTHER" id="PTHR43247">
    <property type="entry name" value="PHOSPHOSERINE AMINOTRANSFERASE"/>
    <property type="match status" value="1"/>
</dbReference>
<dbReference type="PANTHER" id="PTHR43247:SF1">
    <property type="entry name" value="PHOSPHOSERINE AMINOTRANSFERASE"/>
    <property type="match status" value="1"/>
</dbReference>
<dbReference type="Pfam" id="PF00266">
    <property type="entry name" value="Aminotran_5"/>
    <property type="match status" value="1"/>
</dbReference>
<dbReference type="PIRSF" id="PIRSF000525">
    <property type="entry name" value="SerC"/>
    <property type="match status" value="1"/>
</dbReference>
<dbReference type="SUPFAM" id="SSF53383">
    <property type="entry name" value="PLP-dependent transferases"/>
    <property type="match status" value="1"/>
</dbReference>
<dbReference type="PROSITE" id="PS00595">
    <property type="entry name" value="AA_TRANSFER_CLASS_5"/>
    <property type="match status" value="1"/>
</dbReference>
<feature type="chain" id="PRO_1000203550" description="Phosphoserine aminotransferase">
    <location>
        <begin position="1"/>
        <end position="362"/>
    </location>
</feature>
<feature type="binding site" evidence="1">
    <location>
        <position position="9"/>
    </location>
    <ligand>
        <name>L-glutamate</name>
        <dbReference type="ChEBI" id="CHEBI:29985"/>
    </ligand>
</feature>
<feature type="binding site" evidence="1">
    <location>
        <position position="42"/>
    </location>
    <ligand>
        <name>L-glutamate</name>
        <dbReference type="ChEBI" id="CHEBI:29985"/>
    </ligand>
</feature>
<feature type="binding site" evidence="1">
    <location>
        <begin position="76"/>
        <end position="77"/>
    </location>
    <ligand>
        <name>pyridoxal 5'-phosphate</name>
        <dbReference type="ChEBI" id="CHEBI:597326"/>
    </ligand>
</feature>
<feature type="binding site" evidence="1">
    <location>
        <position position="102"/>
    </location>
    <ligand>
        <name>pyridoxal 5'-phosphate</name>
        <dbReference type="ChEBI" id="CHEBI:597326"/>
    </ligand>
</feature>
<feature type="binding site" evidence="1">
    <location>
        <position position="153"/>
    </location>
    <ligand>
        <name>pyridoxal 5'-phosphate</name>
        <dbReference type="ChEBI" id="CHEBI:597326"/>
    </ligand>
</feature>
<feature type="binding site" evidence="1">
    <location>
        <position position="174"/>
    </location>
    <ligand>
        <name>pyridoxal 5'-phosphate</name>
        <dbReference type="ChEBI" id="CHEBI:597326"/>
    </ligand>
</feature>
<feature type="binding site" evidence="1">
    <location>
        <position position="197"/>
    </location>
    <ligand>
        <name>pyridoxal 5'-phosphate</name>
        <dbReference type="ChEBI" id="CHEBI:597326"/>
    </ligand>
</feature>
<feature type="binding site" evidence="1">
    <location>
        <begin position="239"/>
        <end position="240"/>
    </location>
    <ligand>
        <name>pyridoxal 5'-phosphate</name>
        <dbReference type="ChEBI" id="CHEBI:597326"/>
    </ligand>
</feature>
<feature type="modified residue" description="N6-(pyridoxal phosphate)lysine" evidence="1">
    <location>
        <position position="198"/>
    </location>
</feature>
<accession>B5F159</accession>
<comment type="function">
    <text evidence="1">Catalyzes the reversible conversion of 3-phosphohydroxypyruvate to phosphoserine and of 3-hydroxy-2-oxo-4-phosphonooxybutanoate to phosphohydroxythreonine.</text>
</comment>
<comment type="catalytic activity">
    <reaction evidence="1">
        <text>O-phospho-L-serine + 2-oxoglutarate = 3-phosphooxypyruvate + L-glutamate</text>
        <dbReference type="Rhea" id="RHEA:14329"/>
        <dbReference type="ChEBI" id="CHEBI:16810"/>
        <dbReference type="ChEBI" id="CHEBI:18110"/>
        <dbReference type="ChEBI" id="CHEBI:29985"/>
        <dbReference type="ChEBI" id="CHEBI:57524"/>
        <dbReference type="EC" id="2.6.1.52"/>
    </reaction>
</comment>
<comment type="catalytic activity">
    <reaction evidence="1">
        <text>4-(phosphooxy)-L-threonine + 2-oxoglutarate = (R)-3-hydroxy-2-oxo-4-phosphooxybutanoate + L-glutamate</text>
        <dbReference type="Rhea" id="RHEA:16573"/>
        <dbReference type="ChEBI" id="CHEBI:16810"/>
        <dbReference type="ChEBI" id="CHEBI:29985"/>
        <dbReference type="ChEBI" id="CHEBI:58452"/>
        <dbReference type="ChEBI" id="CHEBI:58538"/>
        <dbReference type="EC" id="2.6.1.52"/>
    </reaction>
</comment>
<comment type="cofactor">
    <cofactor evidence="1">
        <name>pyridoxal 5'-phosphate</name>
        <dbReference type="ChEBI" id="CHEBI:597326"/>
    </cofactor>
    <text evidence="1">Binds 1 pyridoxal phosphate per subunit.</text>
</comment>
<comment type="pathway">
    <text evidence="1">Amino-acid biosynthesis; L-serine biosynthesis; L-serine from 3-phospho-D-glycerate: step 2/3.</text>
</comment>
<comment type="pathway">
    <text evidence="1">Cofactor biosynthesis; pyridoxine 5'-phosphate biosynthesis; pyridoxine 5'-phosphate from D-erythrose 4-phosphate: step 3/5.</text>
</comment>
<comment type="subunit">
    <text evidence="1">Homodimer.</text>
</comment>
<comment type="subcellular location">
    <subcellularLocation>
        <location evidence="1">Cytoplasm</location>
    </subcellularLocation>
</comment>
<comment type="similarity">
    <text evidence="1">Belongs to the class-V pyridoxal-phosphate-dependent aminotransferase family. SerC subfamily.</text>
</comment>
<protein>
    <recommendedName>
        <fullName evidence="1">Phosphoserine aminotransferase</fullName>
        <ecNumber evidence="1">2.6.1.52</ecNumber>
    </recommendedName>
    <alternativeName>
        <fullName evidence="1">Phosphohydroxythreonine aminotransferase</fullName>
        <shortName evidence="1">PSAT</shortName>
    </alternativeName>
</protein>
<organism>
    <name type="scientific">Salmonella agona (strain SL483)</name>
    <dbReference type="NCBI Taxonomy" id="454166"/>
    <lineage>
        <taxon>Bacteria</taxon>
        <taxon>Pseudomonadati</taxon>
        <taxon>Pseudomonadota</taxon>
        <taxon>Gammaproteobacteria</taxon>
        <taxon>Enterobacterales</taxon>
        <taxon>Enterobacteriaceae</taxon>
        <taxon>Salmonella</taxon>
    </lineage>
</organism>